<dbReference type="EC" id="1.17.7.3" evidence="1"/>
<dbReference type="EMBL" id="AM743169">
    <property type="protein sequence ID" value="CAQ45307.1"/>
    <property type="molecule type" value="Genomic_DNA"/>
</dbReference>
<dbReference type="RefSeq" id="WP_005409065.1">
    <property type="nucleotide sequence ID" value="NC_010943.1"/>
</dbReference>
<dbReference type="SMR" id="B2FL74"/>
<dbReference type="EnsemblBacteria" id="CAQ45307">
    <property type="protein sequence ID" value="CAQ45307"/>
    <property type="gene ID" value="Smlt1786"/>
</dbReference>
<dbReference type="GeneID" id="93832985"/>
<dbReference type="KEGG" id="sml:Smlt1786"/>
<dbReference type="eggNOG" id="COG0821">
    <property type="taxonomic scope" value="Bacteria"/>
</dbReference>
<dbReference type="HOGENOM" id="CLU_042258_1_0_6"/>
<dbReference type="UniPathway" id="UPA00056">
    <property type="reaction ID" value="UER00096"/>
</dbReference>
<dbReference type="Proteomes" id="UP000008840">
    <property type="component" value="Chromosome"/>
</dbReference>
<dbReference type="GO" id="GO:0051539">
    <property type="term" value="F:4 iron, 4 sulfur cluster binding"/>
    <property type="evidence" value="ECO:0007669"/>
    <property type="project" value="UniProtKB-UniRule"/>
</dbReference>
<dbReference type="GO" id="GO:0046429">
    <property type="term" value="F:4-hydroxy-3-methylbut-2-en-1-yl diphosphate synthase activity (ferredoxin)"/>
    <property type="evidence" value="ECO:0007669"/>
    <property type="project" value="UniProtKB-UniRule"/>
</dbReference>
<dbReference type="GO" id="GO:0141197">
    <property type="term" value="F:4-hydroxy-3-methylbut-2-enyl-diphosphate synthase activity (flavodoxin)"/>
    <property type="evidence" value="ECO:0007669"/>
    <property type="project" value="UniProtKB-EC"/>
</dbReference>
<dbReference type="GO" id="GO:0005506">
    <property type="term" value="F:iron ion binding"/>
    <property type="evidence" value="ECO:0007669"/>
    <property type="project" value="InterPro"/>
</dbReference>
<dbReference type="GO" id="GO:0019288">
    <property type="term" value="P:isopentenyl diphosphate biosynthetic process, methylerythritol 4-phosphate pathway"/>
    <property type="evidence" value="ECO:0007669"/>
    <property type="project" value="UniProtKB-UniRule"/>
</dbReference>
<dbReference type="GO" id="GO:0016114">
    <property type="term" value="P:terpenoid biosynthetic process"/>
    <property type="evidence" value="ECO:0007669"/>
    <property type="project" value="InterPro"/>
</dbReference>
<dbReference type="FunFam" id="3.20.20.20:FF:000001">
    <property type="entry name" value="4-hydroxy-3-methylbut-2-en-1-yl diphosphate synthase (flavodoxin)"/>
    <property type="match status" value="1"/>
</dbReference>
<dbReference type="FunFam" id="3.30.413.10:FF:000012">
    <property type="entry name" value="4-hydroxy-3-methylbut-2-en-1-yl diphosphate synthase (flavodoxin)"/>
    <property type="match status" value="1"/>
</dbReference>
<dbReference type="Gene3D" id="3.20.20.20">
    <property type="entry name" value="Dihydropteroate synthase-like"/>
    <property type="match status" value="1"/>
</dbReference>
<dbReference type="Gene3D" id="3.30.413.10">
    <property type="entry name" value="Sulfite Reductase Hemoprotein, domain 1"/>
    <property type="match status" value="1"/>
</dbReference>
<dbReference type="HAMAP" id="MF_00159">
    <property type="entry name" value="IspG"/>
    <property type="match status" value="1"/>
</dbReference>
<dbReference type="InterPro" id="IPR011005">
    <property type="entry name" value="Dihydropteroate_synth-like_sf"/>
</dbReference>
<dbReference type="InterPro" id="IPR016425">
    <property type="entry name" value="IspG_bac"/>
</dbReference>
<dbReference type="InterPro" id="IPR004588">
    <property type="entry name" value="IspG_bac-typ"/>
</dbReference>
<dbReference type="InterPro" id="IPR045854">
    <property type="entry name" value="NO2/SO3_Rdtase_4Fe4S_sf"/>
</dbReference>
<dbReference type="NCBIfam" id="TIGR00612">
    <property type="entry name" value="ispG_gcpE"/>
    <property type="match status" value="1"/>
</dbReference>
<dbReference type="NCBIfam" id="NF001540">
    <property type="entry name" value="PRK00366.1"/>
    <property type="match status" value="1"/>
</dbReference>
<dbReference type="PANTHER" id="PTHR30454">
    <property type="entry name" value="4-HYDROXY-3-METHYLBUT-2-EN-1-YL DIPHOSPHATE SYNTHASE"/>
    <property type="match status" value="1"/>
</dbReference>
<dbReference type="PANTHER" id="PTHR30454:SF0">
    <property type="entry name" value="4-HYDROXY-3-METHYLBUT-2-EN-1-YL DIPHOSPHATE SYNTHASE (FERREDOXIN), CHLOROPLASTIC"/>
    <property type="match status" value="1"/>
</dbReference>
<dbReference type="Pfam" id="PF04551">
    <property type="entry name" value="GcpE"/>
    <property type="match status" value="1"/>
</dbReference>
<dbReference type="PIRSF" id="PIRSF004640">
    <property type="entry name" value="IspG"/>
    <property type="match status" value="1"/>
</dbReference>
<sequence length="421" mass="45210">MHDAVTRPTPPSDATAWPRRQTHAVQIGGVTVGGGKPVVVQSMTNTDTSDVASSVKQVAELWRAGSEMVRLTVNTVEAAAAIPRIVDKLAMMGIDVPLIGDFHYNGHQLLTAEPACAEALAKYRINPGNVGFGKKKDLQFAQLIEFAIRYNKPVRIGANWGSLDQALAAKLMDENNLREQPWDAGRVLREALIRSALDSAEQAVELGLPRDRIVLSAKVSGVQELIAVYRDLAQRSDFALHLGLTEAGIGSKGIVASSAALGVLLQEGIGDTIRISLTPEPGQSRTQEVIVAQELLQTTGQRAFTPLVTACPGCGRTTSEFFQELAKVVQNHVREKMPLWKIHHPGAENMTLAVMGCIVNGPGESRHANIGISLPGTGETPAAPVFVDGEKKVTLRGDNIAQEFVALIDDYVEHTYVRSAG</sequence>
<organism>
    <name type="scientific">Stenotrophomonas maltophilia (strain K279a)</name>
    <dbReference type="NCBI Taxonomy" id="522373"/>
    <lineage>
        <taxon>Bacteria</taxon>
        <taxon>Pseudomonadati</taxon>
        <taxon>Pseudomonadota</taxon>
        <taxon>Gammaproteobacteria</taxon>
        <taxon>Lysobacterales</taxon>
        <taxon>Lysobacteraceae</taxon>
        <taxon>Stenotrophomonas</taxon>
        <taxon>Stenotrophomonas maltophilia group</taxon>
    </lineage>
</organism>
<reference key="1">
    <citation type="journal article" date="2008" name="Genome Biol.">
        <title>The complete genome, comparative and functional analysis of Stenotrophomonas maltophilia reveals an organism heavily shielded by drug resistance determinants.</title>
        <authorList>
            <person name="Crossman L.C."/>
            <person name="Gould V.C."/>
            <person name="Dow J.M."/>
            <person name="Vernikos G.S."/>
            <person name="Okazaki A."/>
            <person name="Sebaihia M."/>
            <person name="Saunders D."/>
            <person name="Arrowsmith C."/>
            <person name="Carver T."/>
            <person name="Peters N."/>
            <person name="Adlem E."/>
            <person name="Kerhornou A."/>
            <person name="Lord A."/>
            <person name="Murphy L."/>
            <person name="Seeger K."/>
            <person name="Squares R."/>
            <person name="Rutter S."/>
            <person name="Quail M.A."/>
            <person name="Rajandream M.A."/>
            <person name="Harris D."/>
            <person name="Churcher C."/>
            <person name="Bentley S.D."/>
            <person name="Parkhill J."/>
            <person name="Thomson N.R."/>
            <person name="Avison M.B."/>
        </authorList>
    </citation>
    <scope>NUCLEOTIDE SEQUENCE [LARGE SCALE GENOMIC DNA]</scope>
    <source>
        <strain>K279a</strain>
    </source>
</reference>
<protein>
    <recommendedName>
        <fullName evidence="1">4-hydroxy-3-methylbut-2-en-1-yl diphosphate synthase (flavodoxin)</fullName>
        <ecNumber evidence="1">1.17.7.3</ecNumber>
    </recommendedName>
    <alternativeName>
        <fullName evidence="1">1-hydroxy-2-methyl-2-(E)-butenyl 4-diphosphate synthase</fullName>
    </alternativeName>
</protein>
<gene>
    <name evidence="1" type="primary">ispG</name>
    <name type="ordered locus">Smlt1786</name>
</gene>
<keyword id="KW-0004">4Fe-4S</keyword>
<keyword id="KW-0408">Iron</keyword>
<keyword id="KW-0411">Iron-sulfur</keyword>
<keyword id="KW-0414">Isoprene biosynthesis</keyword>
<keyword id="KW-0479">Metal-binding</keyword>
<keyword id="KW-0560">Oxidoreductase</keyword>
<keyword id="KW-1185">Reference proteome</keyword>
<proteinExistence type="inferred from homology"/>
<accession>B2FL74</accession>
<feature type="chain" id="PRO_1000097190" description="4-hydroxy-3-methylbut-2-en-1-yl diphosphate synthase (flavodoxin)">
    <location>
        <begin position="1"/>
        <end position="421"/>
    </location>
</feature>
<feature type="binding site" evidence="1">
    <location>
        <position position="311"/>
    </location>
    <ligand>
        <name>[4Fe-4S] cluster</name>
        <dbReference type="ChEBI" id="CHEBI:49883"/>
    </ligand>
</feature>
<feature type="binding site" evidence="1">
    <location>
        <position position="314"/>
    </location>
    <ligand>
        <name>[4Fe-4S] cluster</name>
        <dbReference type="ChEBI" id="CHEBI:49883"/>
    </ligand>
</feature>
<feature type="binding site" evidence="1">
    <location>
        <position position="357"/>
    </location>
    <ligand>
        <name>[4Fe-4S] cluster</name>
        <dbReference type="ChEBI" id="CHEBI:49883"/>
    </ligand>
</feature>
<feature type="binding site" evidence="1">
    <location>
        <position position="364"/>
    </location>
    <ligand>
        <name>[4Fe-4S] cluster</name>
        <dbReference type="ChEBI" id="CHEBI:49883"/>
    </ligand>
</feature>
<comment type="function">
    <text evidence="1">Converts 2C-methyl-D-erythritol 2,4-cyclodiphosphate (ME-2,4cPP) into 1-hydroxy-2-methyl-2-(E)-butenyl 4-diphosphate.</text>
</comment>
<comment type="catalytic activity">
    <reaction evidence="1">
        <text>(2E)-4-hydroxy-3-methylbut-2-enyl diphosphate + oxidized [flavodoxin] + H2O + 2 H(+) = 2-C-methyl-D-erythritol 2,4-cyclic diphosphate + reduced [flavodoxin]</text>
        <dbReference type="Rhea" id="RHEA:43604"/>
        <dbReference type="Rhea" id="RHEA-COMP:10622"/>
        <dbReference type="Rhea" id="RHEA-COMP:10623"/>
        <dbReference type="ChEBI" id="CHEBI:15377"/>
        <dbReference type="ChEBI" id="CHEBI:15378"/>
        <dbReference type="ChEBI" id="CHEBI:57618"/>
        <dbReference type="ChEBI" id="CHEBI:58210"/>
        <dbReference type="ChEBI" id="CHEBI:58483"/>
        <dbReference type="ChEBI" id="CHEBI:128753"/>
        <dbReference type="EC" id="1.17.7.3"/>
    </reaction>
</comment>
<comment type="cofactor">
    <cofactor evidence="1">
        <name>[4Fe-4S] cluster</name>
        <dbReference type="ChEBI" id="CHEBI:49883"/>
    </cofactor>
    <text evidence="1">Binds 1 [4Fe-4S] cluster.</text>
</comment>
<comment type="pathway">
    <text evidence="1">Isoprenoid biosynthesis; isopentenyl diphosphate biosynthesis via DXP pathway; isopentenyl diphosphate from 1-deoxy-D-xylulose 5-phosphate: step 5/6.</text>
</comment>
<comment type="similarity">
    <text evidence="1">Belongs to the IspG family.</text>
</comment>
<name>ISPG_STRMK</name>
<evidence type="ECO:0000255" key="1">
    <source>
        <dbReference type="HAMAP-Rule" id="MF_00159"/>
    </source>
</evidence>